<reference key="1">
    <citation type="journal article" date="2009" name="Appl. Environ. Microbiol.">
        <title>Novel features of the polysaccharide-digesting gliding bacterium Flavobacterium johnsoniae as revealed by genome sequence analysis.</title>
        <authorList>
            <person name="McBride M.J."/>
            <person name="Xie G."/>
            <person name="Martens E.C."/>
            <person name="Lapidus A."/>
            <person name="Henrissat B."/>
            <person name="Rhodes R.G."/>
            <person name="Goltsman E."/>
            <person name="Wang W."/>
            <person name="Xu J."/>
            <person name="Hunnicutt D.W."/>
            <person name="Staroscik A.M."/>
            <person name="Hoover T.R."/>
            <person name="Cheng Y.Q."/>
            <person name="Stein J.L."/>
        </authorList>
    </citation>
    <scope>NUCLEOTIDE SEQUENCE [LARGE SCALE GENOMIC DNA]</scope>
    <source>
        <strain>ATCC 17061 / DSM 2064 / JCM 8514 / BCRC 14874 / CCUG 350202 / NBRC 14942 / NCIMB 11054 / UW101</strain>
    </source>
</reference>
<reference key="2">
    <citation type="journal article" date="2012" name="Proc. Natl. Acad. Sci. U.S.A.">
        <title>Homology models guide discovery of diverse enzyme specificities among dipeptide epimerases in the enolase superfamily.</title>
        <authorList>
            <person name="Lukk T."/>
            <person name="Sakai A."/>
            <person name="Kalyanaraman C."/>
            <person name="Brown S.D."/>
            <person name="Imker H.J."/>
            <person name="Song L."/>
            <person name="Fedorov A.A."/>
            <person name="Fedorov E.V."/>
            <person name="Toro R."/>
            <person name="Hillerich B."/>
            <person name="Seidel R."/>
            <person name="Patskovsky Y."/>
            <person name="Vetting M.W."/>
            <person name="Nair S.K."/>
            <person name="Babbitt P.C."/>
            <person name="Almo S.C."/>
            <person name="Gerlt J.A."/>
            <person name="Jacobson M.P."/>
        </authorList>
    </citation>
    <scope>FUNCTION</scope>
    <scope>COFACTOR</scope>
</reference>
<evidence type="ECO:0000250" key="1"/>
<evidence type="ECO:0000269" key="2">
    <source>
    </source>
</evidence>
<evidence type="ECO:0000305" key="3"/>
<keyword id="KW-0413">Isomerase</keyword>
<keyword id="KW-0460">Magnesium</keyword>
<keyword id="KW-0479">Metal-binding</keyword>
<comment type="function">
    <text evidence="2">Catalyzes the epimerization of D-Ala-D-Ala to D-Ala-L-Ala. Has broad substrate specificity and catalyzes the epimerization of a variety of dipeptides containing an N-terminal Ala followed by Ser, Thr, Val, Met, His, Phe or Trp (in vitro).</text>
</comment>
<comment type="cofactor">
    <cofactor evidence="2">
        <name>Mg(2+)</name>
        <dbReference type="ChEBI" id="CHEBI:18420"/>
    </cofactor>
    <text evidence="2">Binds 1 Mg(2+) ion per subunit.</text>
</comment>
<comment type="miscellaneous">
    <text>Part of a large, functionally divergent protein family. Protein modeling and substrate docking were used to predict the substrate specificity, prior to biochemical analysis.</text>
</comment>
<comment type="similarity">
    <text evidence="3">Belongs to the mandelate racemase/muconate lactonizing enzyme family.</text>
</comment>
<name>AXEP_FLAJ1</name>
<sequence length="336" mass="37996">MKLILREYNLKLKHTFTISRESIDFQPSLIVELQSEGFSGFGEATSNPYYNITVPMMMQDLEKIRSIIEDTENETPDVFWAKIHPYLKNDMFALCALDLAYNDLYARKKGKKLYELWNYTTERNPMTDYTIGIASIDKMVSKMQELPWPIYKIKLGTKEDIEIVKELRKHTNAVFRIDANCGWGVEETINNSVELKKLGVEFLEQPMKADNWEGHKEVFKHSVLPVIADESCIIEEDVAKCFNHFHGVNVKLVKCGGLTPGKRMIEEAKKLGLRTMVGCMTESTVGISAIAHLLPQLDYVDMDGALLLAEDIATGVTIKDGVVSYSNLNGTGVTLL</sequence>
<proteinExistence type="inferred from homology"/>
<protein>
    <recommendedName>
        <fullName>L-Ala-D/L-amino acid epimerase</fullName>
        <ecNumber>5.1.1.-</ecNumber>
    </recommendedName>
    <alternativeName>
        <fullName>L-Ala-L-Xxx epimerase</fullName>
    </alternativeName>
</protein>
<accession>A5FHW9</accession>
<dbReference type="EC" id="5.1.1.-"/>
<dbReference type="EMBL" id="CP000685">
    <property type="protein sequence ID" value="ABQ05196.1"/>
    <property type="molecule type" value="Genomic_DNA"/>
</dbReference>
<dbReference type="RefSeq" id="WP_012024235.1">
    <property type="nucleotide sequence ID" value="NC_009441.1"/>
</dbReference>
<dbReference type="SMR" id="A5FHW9"/>
<dbReference type="STRING" id="376686.Fjoh_2168"/>
<dbReference type="KEGG" id="fjo:Fjoh_2168"/>
<dbReference type="eggNOG" id="COG4948">
    <property type="taxonomic scope" value="Bacteria"/>
</dbReference>
<dbReference type="HOGENOM" id="CLU_030273_4_3_10"/>
<dbReference type="OrthoDB" id="9775391at2"/>
<dbReference type="Proteomes" id="UP000006694">
    <property type="component" value="Chromosome"/>
</dbReference>
<dbReference type="GO" id="GO:0000287">
    <property type="term" value="F:magnesium ion binding"/>
    <property type="evidence" value="ECO:0000314"/>
    <property type="project" value="UniProtKB"/>
</dbReference>
<dbReference type="GO" id="GO:0016854">
    <property type="term" value="F:racemase and epimerase activity"/>
    <property type="evidence" value="ECO:0000314"/>
    <property type="project" value="UniProtKB"/>
</dbReference>
<dbReference type="GO" id="GO:0016855">
    <property type="term" value="F:racemase and epimerase activity, acting on amino acids and derivatives"/>
    <property type="evidence" value="ECO:0007669"/>
    <property type="project" value="InterPro"/>
</dbReference>
<dbReference type="GO" id="GO:0006518">
    <property type="term" value="P:peptide metabolic process"/>
    <property type="evidence" value="ECO:0000314"/>
    <property type="project" value="UniProtKB"/>
</dbReference>
<dbReference type="CDD" id="cd03319">
    <property type="entry name" value="L-Ala-DL-Glu_epimerase"/>
    <property type="match status" value="1"/>
</dbReference>
<dbReference type="FunFam" id="3.20.20.120:FF:000021">
    <property type="entry name" value="Dipeptide epimerase"/>
    <property type="match status" value="1"/>
</dbReference>
<dbReference type="Gene3D" id="3.20.20.120">
    <property type="entry name" value="Enolase-like C-terminal domain"/>
    <property type="match status" value="1"/>
</dbReference>
<dbReference type="Gene3D" id="3.30.390.10">
    <property type="entry name" value="Enolase-like, N-terminal domain"/>
    <property type="match status" value="1"/>
</dbReference>
<dbReference type="InterPro" id="IPR034593">
    <property type="entry name" value="DgoD-like"/>
</dbReference>
<dbReference type="InterPro" id="IPR034603">
    <property type="entry name" value="Dipeptide_epimerase"/>
</dbReference>
<dbReference type="InterPro" id="IPR036849">
    <property type="entry name" value="Enolase-like_C_sf"/>
</dbReference>
<dbReference type="InterPro" id="IPR029017">
    <property type="entry name" value="Enolase-like_N"/>
</dbReference>
<dbReference type="InterPro" id="IPR029065">
    <property type="entry name" value="Enolase_C-like"/>
</dbReference>
<dbReference type="InterPro" id="IPR013342">
    <property type="entry name" value="Mandelate_racemase_C"/>
</dbReference>
<dbReference type="InterPro" id="IPR013341">
    <property type="entry name" value="Mandelate_racemase_N_dom"/>
</dbReference>
<dbReference type="PANTHER" id="PTHR48080">
    <property type="entry name" value="D-GALACTONATE DEHYDRATASE-RELATED"/>
    <property type="match status" value="1"/>
</dbReference>
<dbReference type="PANTHER" id="PTHR48080:SF3">
    <property type="entry name" value="ENOLASE SUPERFAMILY MEMBER DDB_G0284701"/>
    <property type="match status" value="1"/>
</dbReference>
<dbReference type="Pfam" id="PF13378">
    <property type="entry name" value="MR_MLE_C"/>
    <property type="match status" value="1"/>
</dbReference>
<dbReference type="Pfam" id="PF02746">
    <property type="entry name" value="MR_MLE_N"/>
    <property type="match status" value="1"/>
</dbReference>
<dbReference type="SFLD" id="SFLDS00001">
    <property type="entry name" value="Enolase"/>
    <property type="match status" value="1"/>
</dbReference>
<dbReference type="SFLD" id="SFLDG00180">
    <property type="entry name" value="muconate_cycloisomerase"/>
    <property type="match status" value="1"/>
</dbReference>
<dbReference type="SMART" id="SM00922">
    <property type="entry name" value="MR_MLE"/>
    <property type="match status" value="1"/>
</dbReference>
<dbReference type="SUPFAM" id="SSF51604">
    <property type="entry name" value="Enolase C-terminal domain-like"/>
    <property type="match status" value="1"/>
</dbReference>
<dbReference type="SUPFAM" id="SSF54826">
    <property type="entry name" value="Enolase N-terminal domain-like"/>
    <property type="match status" value="1"/>
</dbReference>
<organism>
    <name type="scientific">Flavobacterium johnsoniae (strain ATCC 17061 / DSM 2064 / JCM 8514 / BCRC 14874 / CCUG 350202 / NBRC 14942 / NCIMB 11054 / UW101)</name>
    <name type="common">Cytophaga johnsonae</name>
    <dbReference type="NCBI Taxonomy" id="376686"/>
    <lineage>
        <taxon>Bacteria</taxon>
        <taxon>Pseudomonadati</taxon>
        <taxon>Bacteroidota</taxon>
        <taxon>Flavobacteriia</taxon>
        <taxon>Flavobacteriales</taxon>
        <taxon>Flavobacteriaceae</taxon>
        <taxon>Flavobacterium</taxon>
    </lineage>
</organism>
<gene>
    <name type="ordered locus">Fjoh_2168</name>
</gene>
<feature type="chain" id="PRO_0000429649" description="L-Ala-D/L-amino acid epimerase">
    <location>
        <begin position="1"/>
        <end position="336"/>
    </location>
</feature>
<feature type="binding site" evidence="1">
    <location>
        <position position="130"/>
    </location>
    <ligand>
        <name>substrate</name>
    </ligand>
</feature>
<feature type="binding site" evidence="1">
    <location>
        <begin position="152"/>
        <end position="154"/>
    </location>
    <ligand>
        <name>substrate</name>
    </ligand>
</feature>
<feature type="binding site" evidence="1">
    <location>
        <position position="178"/>
    </location>
    <ligand>
        <name>Mg(2+)</name>
        <dbReference type="ChEBI" id="CHEBI:18420"/>
    </ligand>
</feature>
<feature type="binding site" evidence="1">
    <location>
        <position position="204"/>
    </location>
    <ligand>
        <name>Mg(2+)</name>
        <dbReference type="ChEBI" id="CHEBI:18420"/>
    </ligand>
</feature>
<feature type="binding site" evidence="1">
    <location>
        <position position="229"/>
    </location>
    <ligand>
        <name>Mg(2+)</name>
        <dbReference type="ChEBI" id="CHEBI:18420"/>
    </ligand>
</feature>
<feature type="binding site" evidence="1">
    <location>
        <position position="251"/>
    </location>
    <ligand>
        <name>substrate</name>
    </ligand>
</feature>
<feature type="binding site" evidence="1">
    <location>
        <begin position="301"/>
        <end position="303"/>
    </location>
    <ligand>
        <name>substrate</name>
    </ligand>
</feature>